<organism>
    <name type="scientific">Methanococcus maripaludis (strain C7 / ATCC BAA-1331)</name>
    <dbReference type="NCBI Taxonomy" id="426368"/>
    <lineage>
        <taxon>Archaea</taxon>
        <taxon>Methanobacteriati</taxon>
        <taxon>Methanobacteriota</taxon>
        <taxon>Methanomada group</taxon>
        <taxon>Methanococci</taxon>
        <taxon>Methanococcales</taxon>
        <taxon>Methanococcaceae</taxon>
        <taxon>Methanococcus</taxon>
    </lineage>
</organism>
<reference key="1">
    <citation type="submission" date="2007-06" db="EMBL/GenBank/DDBJ databases">
        <title>Complete sequence of Methanococcus maripaludis C7.</title>
        <authorList>
            <consortium name="US DOE Joint Genome Institute"/>
            <person name="Copeland A."/>
            <person name="Lucas S."/>
            <person name="Lapidus A."/>
            <person name="Barry K."/>
            <person name="Glavina del Rio T."/>
            <person name="Dalin E."/>
            <person name="Tice H."/>
            <person name="Pitluck S."/>
            <person name="Clum A."/>
            <person name="Schmutz J."/>
            <person name="Larimer F."/>
            <person name="Land M."/>
            <person name="Hauser L."/>
            <person name="Kyrpides N."/>
            <person name="Anderson I."/>
            <person name="Sieprawska-Lupa M."/>
            <person name="Whitman W.B."/>
            <person name="Richardson P."/>
        </authorList>
    </citation>
    <scope>NUCLEOTIDE SEQUENCE [LARGE SCALE GENOMIC DNA]</scope>
    <source>
        <strain>C7 / ATCC BAA-1331</strain>
    </source>
</reference>
<proteinExistence type="inferred from homology"/>
<evidence type="ECO:0000255" key="1">
    <source>
        <dbReference type="HAMAP-Rule" id="MF_01014"/>
    </source>
</evidence>
<dbReference type="EC" id="5.3.1.16" evidence="1"/>
<dbReference type="EMBL" id="CP000745">
    <property type="protein sequence ID" value="ABR66478.1"/>
    <property type="molecule type" value="Genomic_DNA"/>
</dbReference>
<dbReference type="SMR" id="A6VJ52"/>
<dbReference type="STRING" id="426368.MmarC7_1415"/>
<dbReference type="KEGG" id="mmz:MmarC7_1415"/>
<dbReference type="eggNOG" id="arCOG00618">
    <property type="taxonomic scope" value="Archaea"/>
</dbReference>
<dbReference type="HOGENOM" id="CLU_048577_1_1_2"/>
<dbReference type="OrthoDB" id="52866at2157"/>
<dbReference type="UniPathway" id="UPA00031">
    <property type="reaction ID" value="UER00009"/>
</dbReference>
<dbReference type="GO" id="GO:0005737">
    <property type="term" value="C:cytoplasm"/>
    <property type="evidence" value="ECO:0007669"/>
    <property type="project" value="UniProtKB-SubCell"/>
</dbReference>
<dbReference type="GO" id="GO:0003949">
    <property type="term" value="F:1-(5-phosphoribosyl)-5-[(5-phosphoribosylamino)methylideneamino]imidazole-4-carboxamide isomerase activity"/>
    <property type="evidence" value="ECO:0007669"/>
    <property type="project" value="UniProtKB-UniRule"/>
</dbReference>
<dbReference type="GO" id="GO:0000105">
    <property type="term" value="P:L-histidine biosynthetic process"/>
    <property type="evidence" value="ECO:0007669"/>
    <property type="project" value="UniProtKB-UniRule"/>
</dbReference>
<dbReference type="GO" id="GO:0000162">
    <property type="term" value="P:L-tryptophan biosynthetic process"/>
    <property type="evidence" value="ECO:0007669"/>
    <property type="project" value="TreeGrafter"/>
</dbReference>
<dbReference type="CDD" id="cd04732">
    <property type="entry name" value="HisA"/>
    <property type="match status" value="1"/>
</dbReference>
<dbReference type="FunFam" id="3.20.20.70:FF:000009">
    <property type="entry name" value="1-(5-phosphoribosyl)-5-[(5-phosphoribosylamino)methylideneamino] imidazole-4-carboxamide isomerase"/>
    <property type="match status" value="1"/>
</dbReference>
<dbReference type="Gene3D" id="3.20.20.70">
    <property type="entry name" value="Aldolase class I"/>
    <property type="match status" value="1"/>
</dbReference>
<dbReference type="HAMAP" id="MF_01014">
    <property type="entry name" value="HisA"/>
    <property type="match status" value="1"/>
</dbReference>
<dbReference type="InterPro" id="IPR013785">
    <property type="entry name" value="Aldolase_TIM"/>
</dbReference>
<dbReference type="InterPro" id="IPR006062">
    <property type="entry name" value="His_biosynth"/>
</dbReference>
<dbReference type="InterPro" id="IPR006063">
    <property type="entry name" value="HisA_bact_arch"/>
</dbReference>
<dbReference type="InterPro" id="IPR044524">
    <property type="entry name" value="Isoase_HisA-like"/>
</dbReference>
<dbReference type="InterPro" id="IPR023016">
    <property type="entry name" value="Isoase_HisA-like_bact"/>
</dbReference>
<dbReference type="InterPro" id="IPR011060">
    <property type="entry name" value="RibuloseP-bd_barrel"/>
</dbReference>
<dbReference type="NCBIfam" id="TIGR00007">
    <property type="entry name" value="1-(5-phosphoribosyl)-5-[(5-phosphoribosylamino)methylideneamino]imidazole-4-carboxamide isomerase"/>
    <property type="match status" value="1"/>
</dbReference>
<dbReference type="NCBIfam" id="NF010112">
    <property type="entry name" value="PRK13585.1"/>
    <property type="match status" value="1"/>
</dbReference>
<dbReference type="PANTHER" id="PTHR43090">
    <property type="entry name" value="1-(5-PHOSPHORIBOSYL)-5-[(5-PHOSPHORIBOSYLAMINO)METHYLIDENEAMINO] IMIDAZOLE-4-CARBOXAMIDE ISOMERASE"/>
    <property type="match status" value="1"/>
</dbReference>
<dbReference type="PANTHER" id="PTHR43090:SF7">
    <property type="entry name" value="1-(5-PHOSPHORIBOSYL)-5-[(5-PHOSPHORIBOSYLAMINO)METHYLIDENEAMINO] IMIDAZOLE-4-CARBOXAMIDE ISOMERASE"/>
    <property type="match status" value="1"/>
</dbReference>
<dbReference type="Pfam" id="PF00977">
    <property type="entry name" value="His_biosynth"/>
    <property type="match status" value="1"/>
</dbReference>
<dbReference type="SUPFAM" id="SSF51366">
    <property type="entry name" value="Ribulose-phoshate binding barrel"/>
    <property type="match status" value="1"/>
</dbReference>
<gene>
    <name evidence="1" type="primary">hisA</name>
    <name type="ordered locus">MmarC7_1415</name>
</gene>
<sequence length="238" mass="25808">MLVIPAVDMKNKKCVQLIQGNPDKKHVELDNPPEIAKKWVSEGAEMLHLVDLDGALDGKRVNDEFIEDIIKTSGVPVQIGGGIRSIEDAVYLIEKGAEKVIIGTVAVENPEIIRELSKKIGSEKIMVSLDAKDGKVVIKGWKEKTKYTPVEIGKILEEMGAGSILFTNVDSEGLLNGINIEPTKELVDNLKIPIVASGGVTTIDDLLKFKKIGVYGVVVGSAIYKNLINLKDAIEAVK</sequence>
<feature type="chain" id="PRO_1000063219" description="1-(5-phosphoribosyl)-5-[(5-phosphoribosylamino)methylideneamino] imidazole-4-carboxamide isomerase">
    <location>
        <begin position="1"/>
        <end position="238"/>
    </location>
</feature>
<feature type="active site" description="Proton acceptor" evidence="1">
    <location>
        <position position="8"/>
    </location>
</feature>
<feature type="active site" description="Proton donor" evidence="1">
    <location>
        <position position="130"/>
    </location>
</feature>
<name>HIS4_METM7</name>
<accession>A6VJ52</accession>
<protein>
    <recommendedName>
        <fullName evidence="1">1-(5-phosphoribosyl)-5-[(5-phosphoribosylamino)methylideneamino] imidazole-4-carboxamide isomerase</fullName>
        <ecNumber evidence="1">5.3.1.16</ecNumber>
    </recommendedName>
    <alternativeName>
        <fullName evidence="1">Phosphoribosylformimino-5-aminoimidazole carboxamide ribotide isomerase</fullName>
    </alternativeName>
</protein>
<comment type="catalytic activity">
    <reaction evidence="1">
        <text>1-(5-phospho-beta-D-ribosyl)-5-[(5-phospho-beta-D-ribosylamino)methylideneamino]imidazole-4-carboxamide = 5-[(5-phospho-1-deoxy-D-ribulos-1-ylimino)methylamino]-1-(5-phospho-beta-D-ribosyl)imidazole-4-carboxamide</text>
        <dbReference type="Rhea" id="RHEA:15469"/>
        <dbReference type="ChEBI" id="CHEBI:58435"/>
        <dbReference type="ChEBI" id="CHEBI:58525"/>
        <dbReference type="EC" id="5.3.1.16"/>
    </reaction>
</comment>
<comment type="pathway">
    <text evidence="1">Amino-acid biosynthesis; L-histidine biosynthesis; L-histidine from 5-phospho-alpha-D-ribose 1-diphosphate: step 4/9.</text>
</comment>
<comment type="subcellular location">
    <subcellularLocation>
        <location evidence="1">Cytoplasm</location>
    </subcellularLocation>
</comment>
<comment type="similarity">
    <text evidence="1">Belongs to the HisA/HisF family.</text>
</comment>
<keyword id="KW-0028">Amino-acid biosynthesis</keyword>
<keyword id="KW-0963">Cytoplasm</keyword>
<keyword id="KW-0368">Histidine biosynthesis</keyword>
<keyword id="KW-0413">Isomerase</keyword>